<comment type="function">
    <text evidence="1">Activates ribosomal RNA transcription. Plays a direct role in upstream activation of rRNA promoters.</text>
</comment>
<comment type="subunit">
    <text evidence="1">Homodimer.</text>
</comment>
<comment type="similarity">
    <text evidence="1">Belongs to the transcriptional regulatory Fis family.</text>
</comment>
<keyword id="KW-0010">Activator</keyword>
<keyword id="KW-0238">DNA-binding</keyword>
<keyword id="KW-0804">Transcription</keyword>
<keyword id="KW-0805">Transcription regulation</keyword>
<sequence length="98" mass="11240">MFEQRVNSDVLTVSTVNSQDQVTQKPLRDSVKQALKNYFAQLNGQDVNDLYELVLAEVEQPLLDMVMQYTRGNQTRAALMMGINRGTLRKKLKKYGMN</sequence>
<reference key="1">
    <citation type="journal article" date="2009" name="PLoS Genet.">
        <title>Organised genome dynamics in the Escherichia coli species results in highly diverse adaptive paths.</title>
        <authorList>
            <person name="Touchon M."/>
            <person name="Hoede C."/>
            <person name="Tenaillon O."/>
            <person name="Barbe V."/>
            <person name="Baeriswyl S."/>
            <person name="Bidet P."/>
            <person name="Bingen E."/>
            <person name="Bonacorsi S."/>
            <person name="Bouchier C."/>
            <person name="Bouvet O."/>
            <person name="Calteau A."/>
            <person name="Chiapello H."/>
            <person name="Clermont O."/>
            <person name="Cruveiller S."/>
            <person name="Danchin A."/>
            <person name="Diard M."/>
            <person name="Dossat C."/>
            <person name="Karoui M.E."/>
            <person name="Frapy E."/>
            <person name="Garry L."/>
            <person name="Ghigo J.M."/>
            <person name="Gilles A.M."/>
            <person name="Johnson J."/>
            <person name="Le Bouguenec C."/>
            <person name="Lescat M."/>
            <person name="Mangenot S."/>
            <person name="Martinez-Jehanne V."/>
            <person name="Matic I."/>
            <person name="Nassif X."/>
            <person name="Oztas S."/>
            <person name="Petit M.A."/>
            <person name="Pichon C."/>
            <person name="Rouy Z."/>
            <person name="Ruf C.S."/>
            <person name="Schneider D."/>
            <person name="Tourret J."/>
            <person name="Vacherie B."/>
            <person name="Vallenet D."/>
            <person name="Medigue C."/>
            <person name="Rocha E.P.C."/>
            <person name="Denamur E."/>
        </authorList>
    </citation>
    <scope>NUCLEOTIDE SEQUENCE [LARGE SCALE GENOMIC DNA]</scope>
    <source>
        <strain>IAI1</strain>
    </source>
</reference>
<proteinExistence type="inferred from homology"/>
<name>FIS_ECO8A</name>
<feature type="chain" id="PRO_1000118223" description="DNA-binding protein Fis">
    <location>
        <begin position="1"/>
        <end position="98"/>
    </location>
</feature>
<feature type="DNA-binding region" description="H-T-H motif" evidence="1">
    <location>
        <begin position="74"/>
        <end position="93"/>
    </location>
</feature>
<gene>
    <name evidence="1" type="primary">fis</name>
    <name type="ordered locus">ECIAI1_3404</name>
</gene>
<protein>
    <recommendedName>
        <fullName evidence="1">DNA-binding protein Fis</fullName>
    </recommendedName>
</protein>
<accession>B7M0X3</accession>
<dbReference type="EMBL" id="CU928160">
    <property type="protein sequence ID" value="CAR00218.1"/>
    <property type="molecule type" value="Genomic_DNA"/>
</dbReference>
<dbReference type="RefSeq" id="WP_000462905.1">
    <property type="nucleotide sequence ID" value="NC_011741.1"/>
</dbReference>
<dbReference type="SMR" id="B7M0X3"/>
<dbReference type="GeneID" id="98390389"/>
<dbReference type="KEGG" id="ecr:ECIAI1_3404"/>
<dbReference type="HOGENOM" id="CLU_158040_3_0_6"/>
<dbReference type="GO" id="GO:0003700">
    <property type="term" value="F:DNA-binding transcription factor activity"/>
    <property type="evidence" value="ECO:0007669"/>
    <property type="project" value="UniProtKB-UniRule"/>
</dbReference>
<dbReference type="GO" id="GO:0043565">
    <property type="term" value="F:sequence-specific DNA binding"/>
    <property type="evidence" value="ECO:0007669"/>
    <property type="project" value="InterPro"/>
</dbReference>
<dbReference type="FunFam" id="1.10.10.60:FF:000006">
    <property type="entry name" value="DNA-binding protein Fis"/>
    <property type="match status" value="1"/>
</dbReference>
<dbReference type="Gene3D" id="1.10.10.60">
    <property type="entry name" value="Homeodomain-like"/>
    <property type="match status" value="1"/>
</dbReference>
<dbReference type="HAMAP" id="MF_00166">
    <property type="entry name" value="DNA_binding_Fis"/>
    <property type="match status" value="1"/>
</dbReference>
<dbReference type="InterPro" id="IPR005412">
    <property type="entry name" value="Fis_DNA-bd"/>
</dbReference>
<dbReference type="InterPro" id="IPR009057">
    <property type="entry name" value="Homeodomain-like_sf"/>
</dbReference>
<dbReference type="InterPro" id="IPR002197">
    <property type="entry name" value="HTH_Fis"/>
</dbReference>
<dbReference type="InterPro" id="IPR050207">
    <property type="entry name" value="Trans_regulatory_Fis"/>
</dbReference>
<dbReference type="NCBIfam" id="NF001659">
    <property type="entry name" value="PRK00430.1"/>
    <property type="match status" value="1"/>
</dbReference>
<dbReference type="PANTHER" id="PTHR47918">
    <property type="entry name" value="DNA-BINDING PROTEIN FIS"/>
    <property type="match status" value="1"/>
</dbReference>
<dbReference type="PANTHER" id="PTHR47918:SF1">
    <property type="entry name" value="DNA-BINDING PROTEIN FIS"/>
    <property type="match status" value="1"/>
</dbReference>
<dbReference type="Pfam" id="PF02954">
    <property type="entry name" value="HTH_8"/>
    <property type="match status" value="1"/>
</dbReference>
<dbReference type="PIRSF" id="PIRSF002097">
    <property type="entry name" value="DNA-binding_Fis"/>
    <property type="match status" value="1"/>
</dbReference>
<dbReference type="PRINTS" id="PR01591">
    <property type="entry name" value="DNABINDNGFIS"/>
</dbReference>
<dbReference type="PRINTS" id="PR01590">
    <property type="entry name" value="HTHFIS"/>
</dbReference>
<dbReference type="SUPFAM" id="SSF46689">
    <property type="entry name" value="Homeodomain-like"/>
    <property type="match status" value="1"/>
</dbReference>
<organism>
    <name type="scientific">Escherichia coli O8 (strain IAI1)</name>
    <dbReference type="NCBI Taxonomy" id="585034"/>
    <lineage>
        <taxon>Bacteria</taxon>
        <taxon>Pseudomonadati</taxon>
        <taxon>Pseudomonadota</taxon>
        <taxon>Gammaproteobacteria</taxon>
        <taxon>Enterobacterales</taxon>
        <taxon>Enterobacteriaceae</taxon>
        <taxon>Escherichia</taxon>
    </lineage>
</organism>
<evidence type="ECO:0000255" key="1">
    <source>
        <dbReference type="HAMAP-Rule" id="MF_00166"/>
    </source>
</evidence>